<name>TRPD_YERPA</name>
<gene>
    <name evidence="1" type="primary">trpD</name>
    <name type="ordered locus">YPA_1566</name>
</gene>
<keyword id="KW-0028">Amino-acid biosynthesis</keyword>
<keyword id="KW-0057">Aromatic amino acid biosynthesis</keyword>
<keyword id="KW-0328">Glycosyltransferase</keyword>
<keyword id="KW-0460">Magnesium</keyword>
<keyword id="KW-0479">Metal-binding</keyword>
<keyword id="KW-0808">Transferase</keyword>
<keyword id="KW-0822">Tryptophan biosynthesis</keyword>
<dbReference type="EC" id="2.4.2.18" evidence="1"/>
<dbReference type="EMBL" id="CP000308">
    <property type="protein sequence ID" value="ABG13532.1"/>
    <property type="molecule type" value="Genomic_DNA"/>
</dbReference>
<dbReference type="SMR" id="Q1C7P0"/>
<dbReference type="KEGG" id="ypa:YPA_1566"/>
<dbReference type="UniPathway" id="UPA00035">
    <property type="reaction ID" value="UER00041"/>
</dbReference>
<dbReference type="Proteomes" id="UP000001971">
    <property type="component" value="Chromosome"/>
</dbReference>
<dbReference type="GO" id="GO:0005829">
    <property type="term" value="C:cytosol"/>
    <property type="evidence" value="ECO:0007669"/>
    <property type="project" value="TreeGrafter"/>
</dbReference>
<dbReference type="GO" id="GO:0004048">
    <property type="term" value="F:anthranilate phosphoribosyltransferase activity"/>
    <property type="evidence" value="ECO:0007669"/>
    <property type="project" value="UniProtKB-UniRule"/>
</dbReference>
<dbReference type="GO" id="GO:0000287">
    <property type="term" value="F:magnesium ion binding"/>
    <property type="evidence" value="ECO:0007669"/>
    <property type="project" value="UniProtKB-UniRule"/>
</dbReference>
<dbReference type="GO" id="GO:0000162">
    <property type="term" value="P:L-tryptophan biosynthetic process"/>
    <property type="evidence" value="ECO:0007669"/>
    <property type="project" value="UniProtKB-UniRule"/>
</dbReference>
<dbReference type="FunFam" id="1.20.970.10:FF:000003">
    <property type="entry name" value="Anthranilate phosphoribosyltransferase"/>
    <property type="match status" value="1"/>
</dbReference>
<dbReference type="FunFam" id="3.40.1030.10:FF:000002">
    <property type="entry name" value="Anthranilate phosphoribosyltransferase"/>
    <property type="match status" value="1"/>
</dbReference>
<dbReference type="Gene3D" id="3.40.1030.10">
    <property type="entry name" value="Nucleoside phosphorylase/phosphoribosyltransferase catalytic domain"/>
    <property type="match status" value="1"/>
</dbReference>
<dbReference type="Gene3D" id="1.20.970.10">
    <property type="entry name" value="Transferase, Pyrimidine Nucleoside Phosphorylase, Chain C"/>
    <property type="match status" value="1"/>
</dbReference>
<dbReference type="HAMAP" id="MF_00211">
    <property type="entry name" value="TrpD"/>
    <property type="match status" value="1"/>
</dbReference>
<dbReference type="InterPro" id="IPR005940">
    <property type="entry name" value="Anthranilate_Pribosyl_Tfrase"/>
</dbReference>
<dbReference type="InterPro" id="IPR000312">
    <property type="entry name" value="Glycosyl_Trfase_fam3"/>
</dbReference>
<dbReference type="InterPro" id="IPR017459">
    <property type="entry name" value="Glycosyl_Trfase_fam3_N_dom"/>
</dbReference>
<dbReference type="InterPro" id="IPR036320">
    <property type="entry name" value="Glycosyl_Trfase_fam3_N_dom_sf"/>
</dbReference>
<dbReference type="InterPro" id="IPR035902">
    <property type="entry name" value="Nuc_phospho_transferase"/>
</dbReference>
<dbReference type="NCBIfam" id="TIGR01245">
    <property type="entry name" value="trpD"/>
    <property type="match status" value="1"/>
</dbReference>
<dbReference type="PANTHER" id="PTHR43285">
    <property type="entry name" value="ANTHRANILATE PHOSPHORIBOSYLTRANSFERASE"/>
    <property type="match status" value="1"/>
</dbReference>
<dbReference type="PANTHER" id="PTHR43285:SF2">
    <property type="entry name" value="ANTHRANILATE PHOSPHORIBOSYLTRANSFERASE"/>
    <property type="match status" value="1"/>
</dbReference>
<dbReference type="Pfam" id="PF02885">
    <property type="entry name" value="Glycos_trans_3N"/>
    <property type="match status" value="1"/>
</dbReference>
<dbReference type="Pfam" id="PF00591">
    <property type="entry name" value="Glycos_transf_3"/>
    <property type="match status" value="1"/>
</dbReference>
<dbReference type="SUPFAM" id="SSF52418">
    <property type="entry name" value="Nucleoside phosphorylase/phosphoribosyltransferase catalytic domain"/>
    <property type="match status" value="1"/>
</dbReference>
<dbReference type="SUPFAM" id="SSF47648">
    <property type="entry name" value="Nucleoside phosphorylase/phosphoribosyltransferase N-terminal domain"/>
    <property type="match status" value="1"/>
</dbReference>
<evidence type="ECO:0000255" key="1">
    <source>
        <dbReference type="HAMAP-Rule" id="MF_00211"/>
    </source>
</evidence>
<accession>Q1C7P0</accession>
<comment type="function">
    <text evidence="1">Catalyzes the transfer of the phosphoribosyl group of 5-phosphorylribose-1-pyrophosphate (PRPP) to anthranilate to yield N-(5'-phosphoribosyl)-anthranilate (PRA).</text>
</comment>
<comment type="catalytic activity">
    <reaction evidence="1">
        <text>N-(5-phospho-beta-D-ribosyl)anthranilate + diphosphate = 5-phospho-alpha-D-ribose 1-diphosphate + anthranilate</text>
        <dbReference type="Rhea" id="RHEA:11768"/>
        <dbReference type="ChEBI" id="CHEBI:16567"/>
        <dbReference type="ChEBI" id="CHEBI:18277"/>
        <dbReference type="ChEBI" id="CHEBI:33019"/>
        <dbReference type="ChEBI" id="CHEBI:58017"/>
        <dbReference type="EC" id="2.4.2.18"/>
    </reaction>
</comment>
<comment type="cofactor">
    <cofactor evidence="1">
        <name>Mg(2+)</name>
        <dbReference type="ChEBI" id="CHEBI:18420"/>
    </cofactor>
    <text evidence="1">Binds 2 magnesium ions per monomer.</text>
</comment>
<comment type="pathway">
    <text evidence="1">Amino-acid biosynthesis; L-tryptophan biosynthesis; L-tryptophan from chorismate: step 2/5.</text>
</comment>
<comment type="subunit">
    <text evidence="1">Homodimer.</text>
</comment>
<comment type="similarity">
    <text evidence="1">Belongs to the anthranilate phosphoribosyltransferase family.</text>
</comment>
<feature type="chain" id="PRO_1000043081" description="Anthranilate phosphoribosyltransferase">
    <location>
        <begin position="1"/>
        <end position="332"/>
    </location>
</feature>
<feature type="binding site" evidence="1">
    <location>
        <position position="79"/>
    </location>
    <ligand>
        <name>5-phospho-alpha-D-ribose 1-diphosphate</name>
        <dbReference type="ChEBI" id="CHEBI:58017"/>
    </ligand>
</feature>
<feature type="binding site" evidence="1">
    <location>
        <position position="79"/>
    </location>
    <ligand>
        <name>anthranilate</name>
        <dbReference type="ChEBI" id="CHEBI:16567"/>
        <label>1</label>
    </ligand>
</feature>
<feature type="binding site" evidence="1">
    <location>
        <begin position="82"/>
        <end position="83"/>
    </location>
    <ligand>
        <name>5-phospho-alpha-D-ribose 1-diphosphate</name>
        <dbReference type="ChEBI" id="CHEBI:58017"/>
    </ligand>
</feature>
<feature type="binding site" evidence="1">
    <location>
        <position position="87"/>
    </location>
    <ligand>
        <name>5-phospho-alpha-D-ribose 1-diphosphate</name>
        <dbReference type="ChEBI" id="CHEBI:58017"/>
    </ligand>
</feature>
<feature type="binding site" evidence="1">
    <location>
        <begin position="89"/>
        <end position="92"/>
    </location>
    <ligand>
        <name>5-phospho-alpha-D-ribose 1-diphosphate</name>
        <dbReference type="ChEBI" id="CHEBI:58017"/>
    </ligand>
</feature>
<feature type="binding site" evidence="1">
    <location>
        <position position="91"/>
    </location>
    <ligand>
        <name>Mg(2+)</name>
        <dbReference type="ChEBI" id="CHEBI:18420"/>
        <label>1</label>
    </ligand>
</feature>
<feature type="binding site" evidence="1">
    <location>
        <begin position="107"/>
        <end position="115"/>
    </location>
    <ligand>
        <name>5-phospho-alpha-D-ribose 1-diphosphate</name>
        <dbReference type="ChEBI" id="CHEBI:58017"/>
    </ligand>
</feature>
<feature type="binding site" evidence="1">
    <location>
        <position position="110"/>
    </location>
    <ligand>
        <name>anthranilate</name>
        <dbReference type="ChEBI" id="CHEBI:16567"/>
        <label>1</label>
    </ligand>
</feature>
<feature type="binding site" evidence="1">
    <location>
        <position position="119"/>
    </location>
    <ligand>
        <name>5-phospho-alpha-D-ribose 1-diphosphate</name>
        <dbReference type="ChEBI" id="CHEBI:58017"/>
    </ligand>
</feature>
<feature type="binding site" evidence="1">
    <location>
        <position position="165"/>
    </location>
    <ligand>
        <name>anthranilate</name>
        <dbReference type="ChEBI" id="CHEBI:16567"/>
        <label>2</label>
    </ligand>
</feature>
<feature type="binding site" evidence="1">
    <location>
        <position position="223"/>
    </location>
    <ligand>
        <name>Mg(2+)</name>
        <dbReference type="ChEBI" id="CHEBI:18420"/>
        <label>2</label>
    </ligand>
</feature>
<feature type="binding site" evidence="1">
    <location>
        <position position="224"/>
    </location>
    <ligand>
        <name>Mg(2+)</name>
        <dbReference type="ChEBI" id="CHEBI:18420"/>
        <label>1</label>
    </ligand>
</feature>
<feature type="binding site" evidence="1">
    <location>
        <position position="224"/>
    </location>
    <ligand>
        <name>Mg(2+)</name>
        <dbReference type="ChEBI" id="CHEBI:18420"/>
        <label>2</label>
    </ligand>
</feature>
<organism>
    <name type="scientific">Yersinia pestis bv. Antiqua (strain Antiqua)</name>
    <dbReference type="NCBI Taxonomy" id="360102"/>
    <lineage>
        <taxon>Bacteria</taxon>
        <taxon>Pseudomonadati</taxon>
        <taxon>Pseudomonadota</taxon>
        <taxon>Gammaproteobacteria</taxon>
        <taxon>Enterobacterales</taxon>
        <taxon>Yersiniaceae</taxon>
        <taxon>Yersinia</taxon>
    </lineage>
</organism>
<reference key="1">
    <citation type="journal article" date="2006" name="J. Bacteriol.">
        <title>Complete genome sequence of Yersinia pestis strains Antiqua and Nepal516: evidence of gene reduction in an emerging pathogen.</title>
        <authorList>
            <person name="Chain P.S.G."/>
            <person name="Hu P."/>
            <person name="Malfatti S.A."/>
            <person name="Radnedge L."/>
            <person name="Larimer F."/>
            <person name="Vergez L.M."/>
            <person name="Worsham P."/>
            <person name="Chu M.C."/>
            <person name="Andersen G.L."/>
        </authorList>
    </citation>
    <scope>NUCLEOTIDE SEQUENCE [LARGE SCALE GENOMIC DNA]</scope>
    <source>
        <strain>Antiqua</strain>
    </source>
</reference>
<protein>
    <recommendedName>
        <fullName evidence="1">Anthranilate phosphoribosyltransferase</fullName>
        <ecNumber evidence="1">2.4.2.18</ecNumber>
    </recommendedName>
</protein>
<sequence>MQHLFEKLFRAESMSQEESQQLFAAIVRGELEPSQLAAVLISMKVRGETPAEIAGAAQALLADAQHFPRPDYLFADIVGTGGDGTNSINISTASAFVAASCGVKVAKHGNRSVSSRSGSSDLLAAFGIRLDMSAEQSRLALDDLGVCFLFAPQYHTGFRHAMPVRQQLKTRTLFNVLGPLINPARPPLALIGVYSPELVLPIAQTLKVLGYQRAAVVHGGGMDEVAIHAPTQVAELNNGSIESYQLTPEDFGLNRYPLAALQGGMPEENRDILARLLQGKGETAHAAAVAANVALLLKLYGQENLRHNAQQALEMIHSGQAFDRVTALAARG</sequence>
<proteinExistence type="inferred from homology"/>